<protein>
    <recommendedName>
        <fullName evidence="1">Light-independent protochlorophyllide reductase iron-sulfur ATP-binding protein</fullName>
        <shortName evidence="1">DPOR subunit L</shortName>
        <shortName evidence="1">LI-POR subunit L</shortName>
        <ecNumber evidence="1">1.3.7.7</ecNumber>
    </recommendedName>
</protein>
<geneLocation type="chloroplast"/>
<dbReference type="EC" id="1.3.7.7" evidence="1"/>
<dbReference type="EMBL" id="AY958086">
    <property type="protein sequence ID" value="AAX45805.1"/>
    <property type="molecule type" value="Genomic_DNA"/>
</dbReference>
<dbReference type="RefSeq" id="YP_636519.1">
    <property type="nucleotide sequence ID" value="NC_008117.1"/>
</dbReference>
<dbReference type="SMR" id="Q32RK7"/>
<dbReference type="GeneID" id="4108125"/>
<dbReference type="UniPathway" id="UPA00670"/>
<dbReference type="GO" id="GO:0009507">
    <property type="term" value="C:chloroplast"/>
    <property type="evidence" value="ECO:0007669"/>
    <property type="project" value="UniProtKB-SubCell"/>
</dbReference>
<dbReference type="GO" id="GO:0051539">
    <property type="term" value="F:4 iron, 4 sulfur cluster binding"/>
    <property type="evidence" value="ECO:0007669"/>
    <property type="project" value="UniProtKB-UniRule"/>
</dbReference>
<dbReference type="GO" id="GO:0005524">
    <property type="term" value="F:ATP binding"/>
    <property type="evidence" value="ECO:0007669"/>
    <property type="project" value="UniProtKB-UniRule"/>
</dbReference>
<dbReference type="GO" id="GO:0046872">
    <property type="term" value="F:metal ion binding"/>
    <property type="evidence" value="ECO:0007669"/>
    <property type="project" value="UniProtKB-KW"/>
</dbReference>
<dbReference type="GO" id="GO:0016730">
    <property type="term" value="F:oxidoreductase activity, acting on iron-sulfur proteins as donors"/>
    <property type="evidence" value="ECO:0007669"/>
    <property type="project" value="InterPro"/>
</dbReference>
<dbReference type="GO" id="GO:0016636">
    <property type="term" value="F:oxidoreductase activity, acting on the CH-CH group of donors, iron-sulfur protein as acceptor"/>
    <property type="evidence" value="ECO:0007669"/>
    <property type="project" value="UniProtKB-UniRule"/>
</dbReference>
<dbReference type="GO" id="GO:0036068">
    <property type="term" value="P:light-independent chlorophyll biosynthetic process"/>
    <property type="evidence" value="ECO:0007669"/>
    <property type="project" value="UniProtKB-UniRule"/>
</dbReference>
<dbReference type="GO" id="GO:0019685">
    <property type="term" value="P:photosynthesis, dark reaction"/>
    <property type="evidence" value="ECO:0007669"/>
    <property type="project" value="InterPro"/>
</dbReference>
<dbReference type="CDD" id="cd02032">
    <property type="entry name" value="Bchl-like"/>
    <property type="match status" value="1"/>
</dbReference>
<dbReference type="Gene3D" id="3.40.50.300">
    <property type="entry name" value="P-loop containing nucleotide triphosphate hydrolases"/>
    <property type="match status" value="1"/>
</dbReference>
<dbReference type="HAMAP" id="MF_00355">
    <property type="entry name" value="ChlL_BchL"/>
    <property type="match status" value="1"/>
</dbReference>
<dbReference type="InterPro" id="IPR030655">
    <property type="entry name" value="NifH/chlL_CS"/>
</dbReference>
<dbReference type="InterPro" id="IPR000392">
    <property type="entry name" value="NifH/frxC"/>
</dbReference>
<dbReference type="InterPro" id="IPR027417">
    <property type="entry name" value="P-loop_NTPase"/>
</dbReference>
<dbReference type="InterPro" id="IPR005971">
    <property type="entry name" value="Protochlorophyllide_ATP-bd"/>
</dbReference>
<dbReference type="NCBIfam" id="TIGR01281">
    <property type="entry name" value="DPOR_bchL"/>
    <property type="match status" value="1"/>
</dbReference>
<dbReference type="PANTHER" id="PTHR42864">
    <property type="entry name" value="LIGHT-INDEPENDENT PROTOCHLOROPHYLLIDE REDUCTASE IRON-SULFUR ATP-BINDING PROTEIN"/>
    <property type="match status" value="1"/>
</dbReference>
<dbReference type="PANTHER" id="PTHR42864:SF2">
    <property type="entry name" value="LIGHT-INDEPENDENT PROTOCHLOROPHYLLIDE REDUCTASE IRON-SULFUR ATP-BINDING PROTEIN"/>
    <property type="match status" value="1"/>
</dbReference>
<dbReference type="Pfam" id="PF00142">
    <property type="entry name" value="Fer4_NifH"/>
    <property type="match status" value="1"/>
</dbReference>
<dbReference type="PIRSF" id="PIRSF000363">
    <property type="entry name" value="Nitrogenase_iron"/>
    <property type="match status" value="1"/>
</dbReference>
<dbReference type="PRINTS" id="PR00091">
    <property type="entry name" value="NITROGNASEII"/>
</dbReference>
<dbReference type="SUPFAM" id="SSF52540">
    <property type="entry name" value="P-loop containing nucleoside triphosphate hydrolases"/>
    <property type="match status" value="1"/>
</dbReference>
<dbReference type="PROSITE" id="PS00746">
    <property type="entry name" value="NIFH_FRXC_1"/>
    <property type="match status" value="1"/>
</dbReference>
<dbReference type="PROSITE" id="PS00692">
    <property type="entry name" value="NIFH_FRXC_2"/>
    <property type="match status" value="1"/>
</dbReference>
<dbReference type="PROSITE" id="PS51026">
    <property type="entry name" value="NIFH_FRXC_3"/>
    <property type="match status" value="1"/>
</dbReference>
<sequence length="290" mass="31832">MKIAVYGKGGIGKSTTSCNISIALARRGKRVLQIGCDPKHDSTFTLTGFLIPTIIDTLQSKDYHYEDVWPEDVIYKGYGGVDCVEAGGPPAGAGCGGYVVGETVKLLKELNAFYEYDVILFDVLGDVVCGGFAAPLNYADYCIIITDNGFDALFAANRIAASVREKARTHPLRLAGLVGNRTSKRDLIDKYVEACPMPVLEVLPLIEDIRVSRVKGKTLFEMAESEPSLNYVCEFYLNIADQILSQPEGVVPKEVPDRELFSLLSDFYLNPSSSRSDMQLEDNSLDFVMV</sequence>
<name>CHLL_ZYGCR</name>
<organism>
    <name type="scientific">Zygnema circumcarinatum</name>
    <name type="common">Green alga</name>
    <dbReference type="NCBI Taxonomy" id="35869"/>
    <lineage>
        <taxon>Eukaryota</taxon>
        <taxon>Viridiplantae</taxon>
        <taxon>Streptophyta</taxon>
        <taxon>Zygnematophyceae</taxon>
        <taxon>Zygnematophycidae</taxon>
        <taxon>Zygnematales</taxon>
        <taxon>Zygnemataceae</taxon>
        <taxon>Zygnema</taxon>
    </lineage>
</organism>
<evidence type="ECO:0000255" key="1">
    <source>
        <dbReference type="HAMAP-Rule" id="MF_00355"/>
    </source>
</evidence>
<comment type="function">
    <text evidence="1">Component of the dark-operative protochlorophyllide reductase (DPOR) that uses Mg-ATP and reduced ferredoxin to reduce ring D of protochlorophyllide (Pchlide) to form chlorophyllide a (Chlide). This reaction is light-independent. The L component serves as a unique electron donor to the NB-component of the complex, and binds Mg-ATP.</text>
</comment>
<comment type="catalytic activity">
    <reaction evidence="1">
        <text>chlorophyllide a + oxidized 2[4Fe-4S]-[ferredoxin] + 2 ADP + 2 phosphate = protochlorophyllide a + reduced 2[4Fe-4S]-[ferredoxin] + 2 ATP + 2 H2O</text>
        <dbReference type="Rhea" id="RHEA:28202"/>
        <dbReference type="Rhea" id="RHEA-COMP:10002"/>
        <dbReference type="Rhea" id="RHEA-COMP:10004"/>
        <dbReference type="ChEBI" id="CHEBI:15377"/>
        <dbReference type="ChEBI" id="CHEBI:30616"/>
        <dbReference type="ChEBI" id="CHEBI:33722"/>
        <dbReference type="ChEBI" id="CHEBI:33723"/>
        <dbReference type="ChEBI" id="CHEBI:43474"/>
        <dbReference type="ChEBI" id="CHEBI:83348"/>
        <dbReference type="ChEBI" id="CHEBI:83350"/>
        <dbReference type="ChEBI" id="CHEBI:456216"/>
        <dbReference type="EC" id="1.3.7.7"/>
    </reaction>
</comment>
<comment type="cofactor">
    <cofactor evidence="1">
        <name>[4Fe-4S] cluster</name>
        <dbReference type="ChEBI" id="CHEBI:49883"/>
    </cofactor>
    <text evidence="1">Binds 1 [4Fe-4S] cluster per dimer.</text>
</comment>
<comment type="pathway">
    <text evidence="1">Porphyrin-containing compound metabolism; chlorophyll biosynthesis (light-independent).</text>
</comment>
<comment type="subunit">
    <text evidence="1">Homodimer. Protochlorophyllide reductase is composed of three subunits; ChlL, ChlN and ChlB.</text>
</comment>
<comment type="subcellular location">
    <subcellularLocation>
        <location>Plastid</location>
        <location>Chloroplast</location>
    </subcellularLocation>
</comment>
<comment type="similarity">
    <text evidence="1">Belongs to the NifH/BchL/ChlL family.</text>
</comment>
<keyword id="KW-0004">4Fe-4S</keyword>
<keyword id="KW-0067">ATP-binding</keyword>
<keyword id="KW-0149">Chlorophyll biosynthesis</keyword>
<keyword id="KW-0150">Chloroplast</keyword>
<keyword id="KW-0408">Iron</keyword>
<keyword id="KW-0411">Iron-sulfur</keyword>
<keyword id="KW-0460">Magnesium</keyword>
<keyword id="KW-0479">Metal-binding</keyword>
<keyword id="KW-0547">Nucleotide-binding</keyword>
<keyword id="KW-0560">Oxidoreductase</keyword>
<keyword id="KW-0602">Photosynthesis</keyword>
<keyword id="KW-0934">Plastid</keyword>
<accession>Q32RK7</accession>
<feature type="chain" id="PRO_0000275270" description="Light-independent protochlorophyllide reductase iron-sulfur ATP-binding protein">
    <location>
        <begin position="1"/>
        <end position="290"/>
    </location>
</feature>
<feature type="binding site" evidence="1">
    <location>
        <begin position="10"/>
        <end position="15"/>
    </location>
    <ligand>
        <name>ATP</name>
        <dbReference type="ChEBI" id="CHEBI:30616"/>
    </ligand>
</feature>
<feature type="binding site" evidence="1">
    <location>
        <position position="14"/>
    </location>
    <ligand>
        <name>Mg(2+)</name>
        <dbReference type="ChEBI" id="CHEBI:18420"/>
    </ligand>
</feature>
<feature type="binding site" evidence="1">
    <location>
        <position position="39"/>
    </location>
    <ligand>
        <name>ATP</name>
        <dbReference type="ChEBI" id="CHEBI:30616"/>
    </ligand>
</feature>
<feature type="binding site" evidence="1">
    <location>
        <position position="95"/>
    </location>
    <ligand>
        <name>[4Fe-4S] cluster</name>
        <dbReference type="ChEBI" id="CHEBI:49883"/>
        <note>ligand shared between dimeric partners</note>
    </ligand>
</feature>
<feature type="binding site" evidence="1">
    <location>
        <position position="129"/>
    </location>
    <ligand>
        <name>[4Fe-4S] cluster</name>
        <dbReference type="ChEBI" id="CHEBI:49883"/>
        <note>ligand shared between dimeric partners</note>
    </ligand>
</feature>
<feature type="binding site" evidence="1">
    <location>
        <begin position="180"/>
        <end position="181"/>
    </location>
    <ligand>
        <name>ATP</name>
        <dbReference type="ChEBI" id="CHEBI:30616"/>
    </ligand>
</feature>
<proteinExistence type="inferred from homology"/>
<gene>
    <name evidence="1" type="primary">chlL</name>
</gene>
<reference key="1">
    <citation type="journal article" date="2005" name="BMC Biol.">
        <title>The complete chloroplast DNA sequences of the charophycean green algae Staurastrum and Zygnema reveal that the chloroplast genome underwent extensive changes during the evolution of the Zygnematales.</title>
        <authorList>
            <person name="Turmel M."/>
            <person name="Otis C."/>
            <person name="Lemieux C."/>
        </authorList>
    </citation>
    <scope>NUCLEOTIDE SEQUENCE [LARGE SCALE GENOMIC DNA]</scope>
</reference>